<reference key="1">
    <citation type="journal article" date="2009" name="Science">
        <title>The genome sequence of taurine cattle: a window to ruminant biology and evolution.</title>
        <authorList>
            <consortium name="The bovine genome sequencing and analysis consortium"/>
        </authorList>
    </citation>
    <scope>NUCLEOTIDE SEQUENCE [LARGE SCALE GENOMIC DNA]</scope>
    <source>
        <strain>Hereford</strain>
    </source>
</reference>
<reference key="2">
    <citation type="submission" date="2007-03" db="EMBL/GenBank/DDBJ databases">
        <authorList>
            <consortium name="NIH - Mammalian Gene Collection (MGC) project"/>
        </authorList>
    </citation>
    <scope>NUCLEOTIDE SEQUENCE [LARGE SCALE MRNA] (ISOFORM 2)</scope>
    <source>
        <strain>Hereford</strain>
        <tissue>Fetal cerebellum</tissue>
    </source>
</reference>
<name>CB068_BOVIN</name>
<comment type="alternative products">
    <event type="alternative splicing"/>
    <isoform>
        <id>A4IFR8-1</id>
        <name>1</name>
        <sequence type="displayed"/>
    </isoform>
    <isoform>
        <id>A4IFR8-2</id>
        <name>2</name>
        <sequence type="described" ref="VSP_032789"/>
    </isoform>
</comment>
<comment type="similarity">
    <text evidence="3">Belongs to the UPF0561 family.</text>
</comment>
<evidence type="ECO:0000256" key="1">
    <source>
        <dbReference type="SAM" id="MobiDB-lite"/>
    </source>
</evidence>
<evidence type="ECO:0000303" key="2">
    <source ref="2"/>
</evidence>
<evidence type="ECO:0000305" key="3"/>
<dbReference type="EMBL" id="AAFC03063289">
    <property type="status" value="NOT_ANNOTATED_CDS"/>
    <property type="molecule type" value="Genomic_DNA"/>
</dbReference>
<dbReference type="EMBL" id="BC134730">
    <property type="protein sequence ID" value="AAI34731.1"/>
    <property type="molecule type" value="mRNA"/>
</dbReference>
<dbReference type="RefSeq" id="NP_001077244.1">
    <molecule id="A4IFR8-2"/>
    <property type="nucleotide sequence ID" value="NM_001083775.1"/>
</dbReference>
<dbReference type="RefSeq" id="XP_005212860.1">
    <molecule id="A4IFR8-1"/>
    <property type="nucleotide sequence ID" value="XM_005212803.5"/>
</dbReference>
<dbReference type="SMR" id="A4IFR8"/>
<dbReference type="FunCoup" id="A4IFR8">
    <property type="interactions" value="1842"/>
</dbReference>
<dbReference type="PaxDb" id="9913-ENSBTAP00000054929"/>
<dbReference type="Ensembl" id="ENSBTAT00000024344.4">
    <molecule id="A4IFR8-2"/>
    <property type="protein sequence ID" value="ENSBTAP00000024344.3"/>
    <property type="gene ID" value="ENSBTAG00000018291.7"/>
</dbReference>
<dbReference type="Ensembl" id="ENSBTAT00000076335.2">
    <molecule id="A4IFR8-1"/>
    <property type="protein sequence ID" value="ENSBTAP00000062359.2"/>
    <property type="gene ID" value="ENSBTAG00000018291.7"/>
</dbReference>
<dbReference type="GeneID" id="616899"/>
<dbReference type="KEGG" id="bta:616899"/>
<dbReference type="CTD" id="616899"/>
<dbReference type="VEuPathDB" id="HostDB:ENSBTAG00000018291"/>
<dbReference type="eggNOG" id="ENOG502S396">
    <property type="taxonomic scope" value="Eukaryota"/>
</dbReference>
<dbReference type="GeneTree" id="ENSGT00390000001901"/>
<dbReference type="HOGENOM" id="CLU_100251_0_0_1"/>
<dbReference type="InParanoid" id="A4IFR8"/>
<dbReference type="OrthoDB" id="10033037at2759"/>
<dbReference type="TreeFam" id="TF328804"/>
<dbReference type="Proteomes" id="UP000009136">
    <property type="component" value="Chromosome 11"/>
</dbReference>
<dbReference type="Bgee" id="ENSBTAG00000018291">
    <property type="expression patterns" value="Expressed in prostate gland and 104 other cell types or tissues"/>
</dbReference>
<dbReference type="InterPro" id="IPR018888">
    <property type="entry name" value="UPF0561"/>
</dbReference>
<dbReference type="PANTHER" id="PTHR34256">
    <property type="entry name" value="UPF0561 PROTEIN C2ORF68"/>
    <property type="match status" value="1"/>
</dbReference>
<dbReference type="PANTHER" id="PTHR34256:SF1">
    <property type="entry name" value="UPF0561 PROTEIN C2ORF68"/>
    <property type="match status" value="1"/>
</dbReference>
<dbReference type="Pfam" id="PF10573">
    <property type="entry name" value="UPF0561"/>
    <property type="match status" value="1"/>
</dbReference>
<feature type="chain" id="PRO_0000328784" description="UPF0561 protein C2orf68 homolog">
    <location>
        <begin position="1"/>
        <end position="166"/>
    </location>
</feature>
<feature type="region of interest" description="Disordered" evidence="1">
    <location>
        <begin position="36"/>
        <end position="108"/>
    </location>
</feature>
<feature type="compositionally biased region" description="Basic and acidic residues" evidence="1">
    <location>
        <begin position="36"/>
        <end position="49"/>
    </location>
</feature>
<feature type="splice variant" id="VSP_032789" description="In isoform 2." evidence="2">
    <original>DDDPGRVSEEVSAHTPLEPLMREALKLRIQEEIAKRQSRH</original>
    <variation>LFPVVGALPSRSSFQGISQRP</variation>
    <location>
        <begin position="127"/>
        <end position="166"/>
    </location>
</feature>
<keyword id="KW-0025">Alternative splicing</keyword>
<keyword id="KW-1185">Reference proteome</keyword>
<organism>
    <name type="scientific">Bos taurus</name>
    <name type="common">Bovine</name>
    <dbReference type="NCBI Taxonomy" id="9913"/>
    <lineage>
        <taxon>Eukaryota</taxon>
        <taxon>Metazoa</taxon>
        <taxon>Chordata</taxon>
        <taxon>Craniata</taxon>
        <taxon>Vertebrata</taxon>
        <taxon>Euteleostomi</taxon>
        <taxon>Mammalia</taxon>
        <taxon>Eutheria</taxon>
        <taxon>Laurasiatheria</taxon>
        <taxon>Artiodactyla</taxon>
        <taxon>Ruminantia</taxon>
        <taxon>Pecora</taxon>
        <taxon>Bovidae</taxon>
        <taxon>Bovinae</taxon>
        <taxon>Bos</taxon>
    </lineage>
</organism>
<accession>A4IFR8</accession>
<sequence>MEAAPSPGSGLCCKPGGRLDMSHGFVHHIRRNQLARDDYDKKVKQAAKEKARRRHTPAPTRPRKPDLQVYLPRHRDGSTHPSNPDCEESGESSSSGSSEPEPPGHQLFCLEYEADSGDITSVIVYQDDDPGRVSEEVSAHTPLEPLMREALKLRIQEEIAKRQSRH</sequence>
<proteinExistence type="evidence at transcript level"/>
<protein>
    <recommendedName>
        <fullName>UPF0561 protein C2orf68 homolog</fullName>
    </recommendedName>
</protein>